<name>MDH_SALSV</name>
<gene>
    <name evidence="1" type="primary">mdh</name>
    <name type="ordered locus">SeSA_A3551</name>
</gene>
<sequence length="312" mass="32476">MKVAVLGAAGGIGQALALLLKNQLPSGSELSLYDIAPVTPGVAVDLSHIPTAVKIKGFSGEDATPALEGADVVLISAGVARKPGMDRSDLFNVNAGIVKNLVQQIAKTCPKACVGIITNPVNTTVAIAAEVLKKAGVYDKNKLFGVTTLDIIRSNTFVAELKGKLPTEVEVPVIGGHSGVTILPLLSQIPGVSFTEQEAAELTKRIQNAGTEVVEAKAGGGSATLSMGQAAARFGLSLVRALQGEKGVVECAYVEGDGQYARFFSQPLLLGKNGVEERKSIGTLSAFEQHSLDAMLDTLKKDIQLGEDFINK</sequence>
<dbReference type="EC" id="1.1.1.37" evidence="1"/>
<dbReference type="EMBL" id="CP001127">
    <property type="protein sequence ID" value="ACF88632.1"/>
    <property type="molecule type" value="Genomic_DNA"/>
</dbReference>
<dbReference type="RefSeq" id="WP_000861586.1">
    <property type="nucleotide sequence ID" value="NC_011094.1"/>
</dbReference>
<dbReference type="SMR" id="B4TWK9"/>
<dbReference type="KEGG" id="sew:SeSA_A3551"/>
<dbReference type="HOGENOM" id="CLU_047181_1_0_6"/>
<dbReference type="Proteomes" id="UP000001865">
    <property type="component" value="Chromosome"/>
</dbReference>
<dbReference type="GO" id="GO:0005737">
    <property type="term" value="C:cytoplasm"/>
    <property type="evidence" value="ECO:0007669"/>
    <property type="project" value="TreeGrafter"/>
</dbReference>
<dbReference type="GO" id="GO:0030060">
    <property type="term" value="F:L-malate dehydrogenase (NAD+) activity"/>
    <property type="evidence" value="ECO:0007669"/>
    <property type="project" value="UniProtKB-UniRule"/>
</dbReference>
<dbReference type="GO" id="GO:0006108">
    <property type="term" value="P:malate metabolic process"/>
    <property type="evidence" value="ECO:0007669"/>
    <property type="project" value="InterPro"/>
</dbReference>
<dbReference type="GO" id="GO:0006099">
    <property type="term" value="P:tricarboxylic acid cycle"/>
    <property type="evidence" value="ECO:0007669"/>
    <property type="project" value="UniProtKB-UniRule"/>
</dbReference>
<dbReference type="CDD" id="cd01337">
    <property type="entry name" value="MDH_glyoxysomal_mitochondrial"/>
    <property type="match status" value="1"/>
</dbReference>
<dbReference type="FunFam" id="3.40.50.720:FF:000017">
    <property type="entry name" value="Malate dehydrogenase"/>
    <property type="match status" value="1"/>
</dbReference>
<dbReference type="FunFam" id="3.90.110.10:FF:000001">
    <property type="entry name" value="Malate dehydrogenase"/>
    <property type="match status" value="1"/>
</dbReference>
<dbReference type="Gene3D" id="3.90.110.10">
    <property type="entry name" value="Lactate dehydrogenase/glycoside hydrolase, family 4, C-terminal"/>
    <property type="match status" value="1"/>
</dbReference>
<dbReference type="Gene3D" id="3.40.50.720">
    <property type="entry name" value="NAD(P)-binding Rossmann-like Domain"/>
    <property type="match status" value="1"/>
</dbReference>
<dbReference type="HAMAP" id="MF_01516">
    <property type="entry name" value="Malate_dehydrog_1"/>
    <property type="match status" value="1"/>
</dbReference>
<dbReference type="InterPro" id="IPR001557">
    <property type="entry name" value="L-lactate/malate_DH"/>
</dbReference>
<dbReference type="InterPro" id="IPR022383">
    <property type="entry name" value="Lactate/malate_DH_C"/>
</dbReference>
<dbReference type="InterPro" id="IPR001236">
    <property type="entry name" value="Lactate/malate_DH_N"/>
</dbReference>
<dbReference type="InterPro" id="IPR015955">
    <property type="entry name" value="Lactate_DH/Glyco_Ohase_4_C"/>
</dbReference>
<dbReference type="InterPro" id="IPR001252">
    <property type="entry name" value="Malate_DH_AS"/>
</dbReference>
<dbReference type="InterPro" id="IPR010097">
    <property type="entry name" value="Malate_DH_type1"/>
</dbReference>
<dbReference type="InterPro" id="IPR023958">
    <property type="entry name" value="Malate_DH_type1_bac"/>
</dbReference>
<dbReference type="InterPro" id="IPR036291">
    <property type="entry name" value="NAD(P)-bd_dom_sf"/>
</dbReference>
<dbReference type="NCBIfam" id="TIGR01772">
    <property type="entry name" value="MDH_euk_gproteo"/>
    <property type="match status" value="1"/>
</dbReference>
<dbReference type="PANTHER" id="PTHR11540">
    <property type="entry name" value="MALATE AND LACTATE DEHYDROGENASE"/>
    <property type="match status" value="1"/>
</dbReference>
<dbReference type="PANTHER" id="PTHR11540:SF16">
    <property type="entry name" value="MALATE DEHYDROGENASE, MITOCHONDRIAL"/>
    <property type="match status" value="1"/>
</dbReference>
<dbReference type="Pfam" id="PF02866">
    <property type="entry name" value="Ldh_1_C"/>
    <property type="match status" value="1"/>
</dbReference>
<dbReference type="Pfam" id="PF00056">
    <property type="entry name" value="Ldh_1_N"/>
    <property type="match status" value="1"/>
</dbReference>
<dbReference type="PIRSF" id="PIRSF000102">
    <property type="entry name" value="Lac_mal_DH"/>
    <property type="match status" value="1"/>
</dbReference>
<dbReference type="SUPFAM" id="SSF56327">
    <property type="entry name" value="LDH C-terminal domain-like"/>
    <property type="match status" value="1"/>
</dbReference>
<dbReference type="SUPFAM" id="SSF51735">
    <property type="entry name" value="NAD(P)-binding Rossmann-fold domains"/>
    <property type="match status" value="1"/>
</dbReference>
<dbReference type="PROSITE" id="PS00068">
    <property type="entry name" value="MDH"/>
    <property type="match status" value="1"/>
</dbReference>
<organism>
    <name type="scientific">Salmonella schwarzengrund (strain CVM19633)</name>
    <dbReference type="NCBI Taxonomy" id="439843"/>
    <lineage>
        <taxon>Bacteria</taxon>
        <taxon>Pseudomonadati</taxon>
        <taxon>Pseudomonadota</taxon>
        <taxon>Gammaproteobacteria</taxon>
        <taxon>Enterobacterales</taxon>
        <taxon>Enterobacteriaceae</taxon>
        <taxon>Salmonella</taxon>
    </lineage>
</organism>
<keyword id="KW-0520">NAD</keyword>
<keyword id="KW-0560">Oxidoreductase</keyword>
<keyword id="KW-0816">Tricarboxylic acid cycle</keyword>
<proteinExistence type="inferred from homology"/>
<comment type="function">
    <text evidence="1">Catalyzes the reversible oxidation of malate to oxaloacetate.</text>
</comment>
<comment type="catalytic activity">
    <reaction evidence="1">
        <text>(S)-malate + NAD(+) = oxaloacetate + NADH + H(+)</text>
        <dbReference type="Rhea" id="RHEA:21432"/>
        <dbReference type="ChEBI" id="CHEBI:15378"/>
        <dbReference type="ChEBI" id="CHEBI:15589"/>
        <dbReference type="ChEBI" id="CHEBI:16452"/>
        <dbReference type="ChEBI" id="CHEBI:57540"/>
        <dbReference type="ChEBI" id="CHEBI:57945"/>
        <dbReference type="EC" id="1.1.1.37"/>
    </reaction>
</comment>
<comment type="subunit">
    <text evidence="1">Homodimer.</text>
</comment>
<comment type="similarity">
    <text evidence="1">Belongs to the LDH/MDH superfamily. MDH type 1 family.</text>
</comment>
<reference key="1">
    <citation type="journal article" date="2011" name="J. Bacteriol.">
        <title>Comparative genomics of 28 Salmonella enterica isolates: evidence for CRISPR-mediated adaptive sublineage evolution.</title>
        <authorList>
            <person name="Fricke W.F."/>
            <person name="Mammel M.K."/>
            <person name="McDermott P.F."/>
            <person name="Tartera C."/>
            <person name="White D.G."/>
            <person name="Leclerc J.E."/>
            <person name="Ravel J."/>
            <person name="Cebula T.A."/>
        </authorList>
    </citation>
    <scope>NUCLEOTIDE SEQUENCE [LARGE SCALE GENOMIC DNA]</scope>
    <source>
        <strain>CVM19633</strain>
    </source>
</reference>
<evidence type="ECO:0000255" key="1">
    <source>
        <dbReference type="HAMAP-Rule" id="MF_01516"/>
    </source>
</evidence>
<accession>B4TWK9</accession>
<feature type="chain" id="PRO_1000191596" description="Malate dehydrogenase">
    <location>
        <begin position="1"/>
        <end position="312"/>
    </location>
</feature>
<feature type="active site" description="Proton acceptor" evidence="1">
    <location>
        <position position="177"/>
    </location>
</feature>
<feature type="binding site" evidence="1">
    <location>
        <begin position="7"/>
        <end position="13"/>
    </location>
    <ligand>
        <name>NAD(+)</name>
        <dbReference type="ChEBI" id="CHEBI:57540"/>
    </ligand>
</feature>
<feature type="binding site" evidence="1">
    <location>
        <position position="34"/>
    </location>
    <ligand>
        <name>NAD(+)</name>
        <dbReference type="ChEBI" id="CHEBI:57540"/>
    </ligand>
</feature>
<feature type="binding site" evidence="1">
    <location>
        <position position="81"/>
    </location>
    <ligand>
        <name>substrate</name>
    </ligand>
</feature>
<feature type="binding site" evidence="1">
    <location>
        <position position="87"/>
    </location>
    <ligand>
        <name>substrate</name>
    </ligand>
</feature>
<feature type="binding site" evidence="1">
    <location>
        <position position="94"/>
    </location>
    <ligand>
        <name>NAD(+)</name>
        <dbReference type="ChEBI" id="CHEBI:57540"/>
    </ligand>
</feature>
<feature type="binding site" evidence="1">
    <location>
        <begin position="117"/>
        <end position="119"/>
    </location>
    <ligand>
        <name>NAD(+)</name>
        <dbReference type="ChEBI" id="CHEBI:57540"/>
    </ligand>
</feature>
<feature type="binding site" evidence="1">
    <location>
        <position position="119"/>
    </location>
    <ligand>
        <name>substrate</name>
    </ligand>
</feature>
<feature type="binding site" evidence="1">
    <location>
        <position position="153"/>
    </location>
    <ligand>
        <name>substrate</name>
    </ligand>
</feature>
<feature type="binding site" evidence="1">
    <location>
        <position position="227"/>
    </location>
    <ligand>
        <name>NAD(+)</name>
        <dbReference type="ChEBI" id="CHEBI:57540"/>
    </ligand>
</feature>
<protein>
    <recommendedName>
        <fullName evidence="1">Malate dehydrogenase</fullName>
        <ecNumber evidence="1">1.1.1.37</ecNumber>
    </recommendedName>
</protein>